<organism evidence="7">
    <name type="scientific">Lucilia cuprina</name>
    <name type="common">Green bottle fly</name>
    <name type="synonym">Australian sheep blowfly</name>
    <dbReference type="NCBI Taxonomy" id="7375"/>
    <lineage>
        <taxon>Eukaryota</taxon>
        <taxon>Metazoa</taxon>
        <taxon>Ecdysozoa</taxon>
        <taxon>Arthropoda</taxon>
        <taxon>Hexapoda</taxon>
        <taxon>Insecta</taxon>
        <taxon>Pterygota</taxon>
        <taxon>Neoptera</taxon>
        <taxon>Endopterygota</taxon>
        <taxon>Diptera</taxon>
        <taxon>Brachycera</taxon>
        <taxon>Muscomorpha</taxon>
        <taxon>Oestroidea</taxon>
        <taxon>Calliphoridae</taxon>
        <taxon>Luciliinae</taxon>
        <taxon>Lucilia</taxon>
    </lineage>
</organism>
<dbReference type="EMBL" id="U79715">
    <property type="protein sequence ID" value="AAB38414.1"/>
    <property type="molecule type" value="mRNA"/>
</dbReference>
<dbReference type="SMR" id="P91745"/>
<dbReference type="OrthoDB" id="6020543at2759"/>
<dbReference type="GO" id="GO:0005576">
    <property type="term" value="C:extracellular region"/>
    <property type="evidence" value="ECO:0007669"/>
    <property type="project" value="InterPro"/>
</dbReference>
<dbReference type="GO" id="GO:0008061">
    <property type="term" value="F:chitin binding"/>
    <property type="evidence" value="ECO:0000314"/>
    <property type="project" value="UniProtKB"/>
</dbReference>
<dbReference type="Gene3D" id="2.170.140.10">
    <property type="entry name" value="Chitin binding domain"/>
    <property type="match status" value="1"/>
</dbReference>
<dbReference type="InterPro" id="IPR002557">
    <property type="entry name" value="Chitin-bd_dom"/>
</dbReference>
<dbReference type="InterPro" id="IPR036508">
    <property type="entry name" value="Chitin-bd_dom_sf"/>
</dbReference>
<dbReference type="Pfam" id="PF01607">
    <property type="entry name" value="CBM_14"/>
    <property type="match status" value="4"/>
</dbReference>
<dbReference type="SMART" id="SM00494">
    <property type="entry name" value="ChtBD2"/>
    <property type="match status" value="5"/>
</dbReference>
<dbReference type="SUPFAM" id="SSF57625">
    <property type="entry name" value="Invertebrate chitin-binding proteins"/>
    <property type="match status" value="4"/>
</dbReference>
<dbReference type="PROSITE" id="PS50940">
    <property type="entry name" value="CHIT_BIND_II"/>
    <property type="match status" value="5"/>
</dbReference>
<proteinExistence type="evidence at protein level"/>
<keyword id="KW-0147">Chitin-binding</keyword>
<keyword id="KW-0903">Direct protein sequencing</keyword>
<keyword id="KW-1015">Disulfide bond</keyword>
<keyword id="KW-0325">Glycoprotein</keyword>
<keyword id="KW-0677">Repeat</keyword>
<keyword id="KW-0732">Signal</keyword>
<sequence>MIIKTLLASVAIMLIATVNAEYNVAKYCELVKIGTLMPSMISCQDYYICRLNNQPIPVKCGANTVFDKDTQGCVPEAQANCILSLDNPCENKDRTFAPSSKACNEWHYCLNGNIVANGSCQPGQIFDASKNSCIYGACNSDDDDSNSDFTPVLNICDIMQNGQFFGDFENCQNWQKCNNGRLQKGICLGNLVYDTKNGMCLQNDGTMCERTNGMVSEDGGAPDETLCTSSNDGPLPDKLTCSVYYICEQDTTSTPTTYKWIKTSCPNGQYFDVFGDGCLDRAKRRVYTGCNRCEYTTGSTTYWVNAVSNDCTKFSTCRNGRKITNEDGSCNSGYYFNEADQYCNMGDFTNYAETNGACQNYSCNGYDCTTKPSAT</sequence>
<evidence type="ECO:0000255" key="1"/>
<evidence type="ECO:0000255" key="2">
    <source>
        <dbReference type="PROSITE-ProRule" id="PRU00144"/>
    </source>
</evidence>
<evidence type="ECO:0000269" key="3">
    <source>
    </source>
</evidence>
<evidence type="ECO:0000269" key="4">
    <source>
    </source>
</evidence>
<evidence type="ECO:0000303" key="5">
    <source>
    </source>
</evidence>
<evidence type="ECO:0000305" key="6"/>
<evidence type="ECO:0000312" key="7">
    <source>
        <dbReference type="EMBL" id="AAB38414.1"/>
    </source>
</evidence>
<reference evidence="6" key="1">
    <citation type="journal article" date="1998" name="Insect Biochem. Mol. Biol.">
        <title>cDNA and deduced amino acid sequences of a peritrophic membrane glycoprotein, 'peritrophin-48', from the larvae of Lucilia cuprina.</title>
        <authorList>
            <person name="Schorderet S."/>
            <person name="Pearson R.D."/>
            <person name="Vuocolo T."/>
            <person name="Eisemann C.H."/>
            <person name="Riding G.A."/>
            <person name="Tellam R.L."/>
        </authorList>
    </citation>
    <scope>NUCLEOTIDE SEQUENCE [MRNA]</scope>
    <scope>PROTEIN SEQUENCE OF 21-47; 60-68; 93-101; 185-196 AND 239-256</scope>
    <scope>TISSUE SPECIFICITY</scope>
    <source>
        <tissue>Larval peritrophic membrane</tissue>
    </source>
</reference>
<reference key="2">
    <citation type="journal article" date="1996" name="J. Biol. Chem.">
        <title>Characterization of a major peritrophic membrane protein, peritrophin-44, from the larvae of Lucilia cuprina. cDNA and deduced amino acid sequences.</title>
        <authorList>
            <person name="Elvin C.M."/>
            <person name="Vuocolo T."/>
            <person name="Pearson R.D."/>
            <person name="East I.J."/>
            <person name="Riding G.A."/>
            <person name="Eisemann C.H."/>
            <person name="Tellam R.L."/>
        </authorList>
    </citation>
    <scope>PROTEIN SEQUENCE OF 21-49</scope>
    <source>
        <tissue>Larval peritrophic membrane</tissue>
    </source>
</reference>
<name>PE48A_LUCCU</name>
<feature type="signal peptide" evidence="3 4">
    <location>
        <begin position="1"/>
        <end position="20"/>
    </location>
</feature>
<feature type="chain" id="PRO_0000023615" description="Peritrophin-48">
    <location>
        <begin position="21"/>
        <end position="375"/>
    </location>
</feature>
<feature type="domain" description="Chitin-binding type-2 1" evidence="2">
    <location>
        <begin position="25"/>
        <end position="83"/>
    </location>
</feature>
<feature type="domain" description="Chitin-binding type-2 2" evidence="2">
    <location>
        <begin position="86"/>
        <end position="143"/>
    </location>
</feature>
<feature type="domain" description="Chitin-binding type-2 3" evidence="2">
    <location>
        <begin position="153"/>
        <end position="210"/>
    </location>
</feature>
<feature type="domain" description="Chitin-binding type-2 4" evidence="2">
    <location>
        <begin position="224"/>
        <end position="292"/>
    </location>
</feature>
<feature type="domain" description="Chitin-binding type-2 5" evidence="2">
    <location>
        <begin position="294"/>
        <end position="360"/>
    </location>
</feature>
<feature type="glycosylation site" description="N-linked (GlcNAc...) asparagine" evidence="1">
    <location>
        <position position="117"/>
    </location>
</feature>
<feature type="glycosylation site" description="N-linked (GlcNAc...) asparagine" evidence="1">
    <location>
        <position position="360"/>
    </location>
</feature>
<feature type="disulfide bond" evidence="2">
    <location>
        <begin position="60"/>
        <end position="73"/>
    </location>
</feature>
<feature type="disulfide bond" evidence="2">
    <location>
        <begin position="120"/>
        <end position="133"/>
    </location>
</feature>
<feature type="disulfide bond" evidence="2">
    <location>
        <begin position="187"/>
        <end position="200"/>
    </location>
</feature>
<feature type="disulfide bond" evidence="2">
    <location>
        <begin position="265"/>
        <end position="278"/>
    </location>
</feature>
<feature type="disulfide bond" evidence="2">
    <location>
        <begin position="330"/>
        <end position="343"/>
    </location>
</feature>
<protein>
    <recommendedName>
        <fullName>Peritrophin-48</fullName>
    </recommendedName>
</protein>
<comment type="function">
    <text evidence="5">May bind chitin or related oligosaccharide structures.</text>
</comment>
<comment type="tissue specificity">
    <text evidence="4">Cardia and midgut peritrophic membrane.</text>
</comment>
<comment type="developmental stage">
    <text>Expressed in all 3 larval instars and adults, but not pupae or eggs.</text>
</comment>
<comment type="PTM">
    <text evidence="4">Glycosylated.</text>
</comment>
<accession>P91745</accession>